<dbReference type="EC" id="3.6.5.3" evidence="1"/>
<dbReference type="EMBL" id="CP000745">
    <property type="protein sequence ID" value="ABR65524.1"/>
    <property type="molecule type" value="Genomic_DNA"/>
</dbReference>
<dbReference type="SMR" id="A6VGE8"/>
<dbReference type="STRING" id="426368.MmarC7_0455"/>
<dbReference type="KEGG" id="mmz:MmarC7_0455"/>
<dbReference type="eggNOG" id="arCOG01563">
    <property type="taxonomic scope" value="Archaea"/>
</dbReference>
<dbReference type="HOGENOM" id="CLU_027154_0_1_2"/>
<dbReference type="OrthoDB" id="7798at2157"/>
<dbReference type="GO" id="GO:0005829">
    <property type="term" value="C:cytosol"/>
    <property type="evidence" value="ECO:0007669"/>
    <property type="project" value="TreeGrafter"/>
</dbReference>
<dbReference type="GO" id="GO:0005525">
    <property type="term" value="F:GTP binding"/>
    <property type="evidence" value="ECO:0007669"/>
    <property type="project" value="UniProtKB-UniRule"/>
</dbReference>
<dbReference type="GO" id="GO:0003924">
    <property type="term" value="F:GTPase activity"/>
    <property type="evidence" value="ECO:0007669"/>
    <property type="project" value="InterPro"/>
</dbReference>
<dbReference type="GO" id="GO:0046872">
    <property type="term" value="F:metal ion binding"/>
    <property type="evidence" value="ECO:0007669"/>
    <property type="project" value="UniProtKB-KW"/>
</dbReference>
<dbReference type="GO" id="GO:0003746">
    <property type="term" value="F:translation elongation factor activity"/>
    <property type="evidence" value="ECO:0007669"/>
    <property type="project" value="UniProtKB-UniRule"/>
</dbReference>
<dbReference type="GO" id="GO:0003743">
    <property type="term" value="F:translation initiation factor activity"/>
    <property type="evidence" value="ECO:0007669"/>
    <property type="project" value="UniProtKB-KW"/>
</dbReference>
<dbReference type="GO" id="GO:0000049">
    <property type="term" value="F:tRNA binding"/>
    <property type="evidence" value="ECO:0007669"/>
    <property type="project" value="InterPro"/>
</dbReference>
<dbReference type="GO" id="GO:0001731">
    <property type="term" value="P:formation of translation preinitiation complex"/>
    <property type="evidence" value="ECO:0007669"/>
    <property type="project" value="TreeGrafter"/>
</dbReference>
<dbReference type="CDD" id="cd01888">
    <property type="entry name" value="eIF2_gamma"/>
    <property type="match status" value="1"/>
</dbReference>
<dbReference type="CDD" id="cd03688">
    <property type="entry name" value="eIF2_gamma_II"/>
    <property type="match status" value="1"/>
</dbReference>
<dbReference type="CDD" id="cd15490">
    <property type="entry name" value="eIF2_gamma_III"/>
    <property type="match status" value="1"/>
</dbReference>
<dbReference type="FunFam" id="2.40.30.10:FF:000009">
    <property type="entry name" value="Eukaryotic translation initiation factor 2 subunit gamma"/>
    <property type="match status" value="1"/>
</dbReference>
<dbReference type="FunFam" id="3.40.50.300:FF:000065">
    <property type="entry name" value="Eukaryotic translation initiation factor 2 subunit gamma"/>
    <property type="match status" value="1"/>
</dbReference>
<dbReference type="FunFam" id="2.40.30.10:FF:000075">
    <property type="entry name" value="Translation initiation factor 2 subunit gamma"/>
    <property type="match status" value="1"/>
</dbReference>
<dbReference type="Gene3D" id="3.40.50.300">
    <property type="entry name" value="P-loop containing nucleotide triphosphate hydrolases"/>
    <property type="match status" value="1"/>
</dbReference>
<dbReference type="Gene3D" id="2.40.30.10">
    <property type="entry name" value="Translation factors"/>
    <property type="match status" value="2"/>
</dbReference>
<dbReference type="HAMAP" id="MF_00119">
    <property type="entry name" value="eIF_2_gamma"/>
    <property type="match status" value="1"/>
</dbReference>
<dbReference type="InterPro" id="IPR050543">
    <property type="entry name" value="eIF2G"/>
</dbReference>
<dbReference type="InterPro" id="IPR015256">
    <property type="entry name" value="eIF2g_C"/>
</dbReference>
<dbReference type="InterPro" id="IPR044127">
    <property type="entry name" value="eIF2g_dom_2"/>
</dbReference>
<dbReference type="InterPro" id="IPR044128">
    <property type="entry name" value="eIF2g_GTP-bd"/>
</dbReference>
<dbReference type="InterPro" id="IPR027417">
    <property type="entry name" value="P-loop_NTPase"/>
</dbReference>
<dbReference type="InterPro" id="IPR005225">
    <property type="entry name" value="Small_GTP-bd"/>
</dbReference>
<dbReference type="InterPro" id="IPR000795">
    <property type="entry name" value="T_Tr_GTP-bd_dom"/>
</dbReference>
<dbReference type="InterPro" id="IPR022424">
    <property type="entry name" value="TIF2_gsu"/>
</dbReference>
<dbReference type="InterPro" id="IPR009000">
    <property type="entry name" value="Transl_B-barrel_sf"/>
</dbReference>
<dbReference type="InterPro" id="IPR009001">
    <property type="entry name" value="Transl_elong_EF1A/Init_IF2_C"/>
</dbReference>
<dbReference type="NCBIfam" id="TIGR03680">
    <property type="entry name" value="eif2g_arch"/>
    <property type="match status" value="1"/>
</dbReference>
<dbReference type="NCBIfam" id="NF003077">
    <property type="entry name" value="PRK04000.1"/>
    <property type="match status" value="1"/>
</dbReference>
<dbReference type="NCBIfam" id="TIGR00231">
    <property type="entry name" value="small_GTP"/>
    <property type="match status" value="1"/>
</dbReference>
<dbReference type="PANTHER" id="PTHR42854">
    <property type="entry name" value="EUKARYOTIC TRANSLATION INITIATION FACTOR 2 SUBUNIT 3 FAMILY MEMBER"/>
    <property type="match status" value="1"/>
</dbReference>
<dbReference type="PANTHER" id="PTHR42854:SF3">
    <property type="entry name" value="EUKARYOTIC TRANSLATION INITIATION FACTOR 2 SUBUNIT 3-RELATED"/>
    <property type="match status" value="1"/>
</dbReference>
<dbReference type="Pfam" id="PF09173">
    <property type="entry name" value="eIF2_C"/>
    <property type="match status" value="1"/>
</dbReference>
<dbReference type="Pfam" id="PF00009">
    <property type="entry name" value="GTP_EFTU"/>
    <property type="match status" value="1"/>
</dbReference>
<dbReference type="PRINTS" id="PR00315">
    <property type="entry name" value="ELONGATNFCT"/>
</dbReference>
<dbReference type="SUPFAM" id="SSF50465">
    <property type="entry name" value="EF-Tu/eEF-1alpha/eIF2-gamma C-terminal domain"/>
    <property type="match status" value="1"/>
</dbReference>
<dbReference type="SUPFAM" id="SSF52540">
    <property type="entry name" value="P-loop containing nucleoside triphosphate hydrolases"/>
    <property type="match status" value="1"/>
</dbReference>
<dbReference type="SUPFAM" id="SSF50447">
    <property type="entry name" value="Translation proteins"/>
    <property type="match status" value="1"/>
</dbReference>
<dbReference type="PROSITE" id="PS51722">
    <property type="entry name" value="G_TR_2"/>
    <property type="match status" value="1"/>
</dbReference>
<proteinExistence type="inferred from homology"/>
<gene>
    <name evidence="1" type="primary">eif2g</name>
    <name type="ordered locus">MmarC7_0455</name>
</gene>
<sequence>MAASNQSEVNIGMVGHVDHGKTSLTRKLTGVWTDTHSEELKRGISIRLGYADCEIKKCETCDEPECYTVDKKCDACGGKVSTLRKISFVDAPGHETLMATMLSGASLMDGAILVIAASEECPQPQTKEHLMALDALGVEHILIVQNKIDLVSEEAAIENYNQIKEFTKGTVAENAPIIPVSAHHGANLDVLLKAIQEFIPTPERDETLTPKLYVARSFDVNKPGSEIKDLKGGVIGGSIIQGALKVGDDLEIRPGIKVTEGNKTHWVPIVTKIISLGVGGKKLKSAAPGGLIGVGTELDPNLTKSDALSGSLAGLPGTLPETLEKMVIKPQLLERVVGSQDELIIEPLKTNEVLMLNVGTSTTVGVTVSARADKAEIKLKLPVCADKGDRVAISRKIGSRWRLIGYGIIL</sequence>
<reference key="1">
    <citation type="submission" date="2007-06" db="EMBL/GenBank/DDBJ databases">
        <title>Complete sequence of Methanococcus maripaludis C7.</title>
        <authorList>
            <consortium name="US DOE Joint Genome Institute"/>
            <person name="Copeland A."/>
            <person name="Lucas S."/>
            <person name="Lapidus A."/>
            <person name="Barry K."/>
            <person name="Glavina del Rio T."/>
            <person name="Dalin E."/>
            <person name="Tice H."/>
            <person name="Pitluck S."/>
            <person name="Clum A."/>
            <person name="Schmutz J."/>
            <person name="Larimer F."/>
            <person name="Land M."/>
            <person name="Hauser L."/>
            <person name="Kyrpides N."/>
            <person name="Anderson I."/>
            <person name="Sieprawska-Lupa M."/>
            <person name="Whitman W.B."/>
            <person name="Richardson P."/>
        </authorList>
    </citation>
    <scope>NUCLEOTIDE SEQUENCE [LARGE SCALE GENOMIC DNA]</scope>
    <source>
        <strain>C7 / ATCC BAA-1331</strain>
    </source>
</reference>
<name>IF2G_METM7</name>
<comment type="function">
    <text evidence="1">eIF-2 functions in the early steps of protein synthesis by forming a ternary complex with GTP and initiator tRNA.</text>
</comment>
<comment type="catalytic activity">
    <reaction evidence="1">
        <text>GTP + H2O = GDP + phosphate + H(+)</text>
        <dbReference type="Rhea" id="RHEA:19669"/>
        <dbReference type="ChEBI" id="CHEBI:15377"/>
        <dbReference type="ChEBI" id="CHEBI:15378"/>
        <dbReference type="ChEBI" id="CHEBI:37565"/>
        <dbReference type="ChEBI" id="CHEBI:43474"/>
        <dbReference type="ChEBI" id="CHEBI:58189"/>
        <dbReference type="EC" id="3.6.5.3"/>
    </reaction>
</comment>
<comment type="cofactor">
    <cofactor evidence="1">
        <name>Mg(2+)</name>
        <dbReference type="ChEBI" id="CHEBI:18420"/>
    </cofactor>
</comment>
<comment type="subunit">
    <text evidence="1">Heterotrimer composed of an alpha, a beta and a gamma chain.</text>
</comment>
<comment type="similarity">
    <text evidence="1">Belongs to the TRAFAC class translation factor GTPase superfamily. Classic translation factor GTPase family. EIF2G subfamily.</text>
</comment>
<organism>
    <name type="scientific">Methanococcus maripaludis (strain C7 / ATCC BAA-1331)</name>
    <dbReference type="NCBI Taxonomy" id="426368"/>
    <lineage>
        <taxon>Archaea</taxon>
        <taxon>Methanobacteriati</taxon>
        <taxon>Methanobacteriota</taxon>
        <taxon>Methanomada group</taxon>
        <taxon>Methanococci</taxon>
        <taxon>Methanococcales</taxon>
        <taxon>Methanococcaceae</taxon>
        <taxon>Methanococcus</taxon>
    </lineage>
</organism>
<feature type="chain" id="PRO_1000015790" description="Translation initiation factor 2 subunit gamma">
    <location>
        <begin position="1"/>
        <end position="410"/>
    </location>
</feature>
<feature type="domain" description="tr-type G" evidence="1">
    <location>
        <begin position="6"/>
        <end position="203"/>
    </location>
</feature>
<feature type="region of interest" description="G1" evidence="1">
    <location>
        <begin position="15"/>
        <end position="22"/>
    </location>
</feature>
<feature type="region of interest" description="G2" evidence="1">
    <location>
        <begin position="43"/>
        <end position="47"/>
    </location>
</feature>
<feature type="region of interest" description="G3" evidence="1">
    <location>
        <begin position="90"/>
        <end position="93"/>
    </location>
</feature>
<feature type="region of interest" description="G4" evidence="1">
    <location>
        <begin position="146"/>
        <end position="149"/>
    </location>
</feature>
<feature type="region of interest" description="G5" evidence="1">
    <location>
        <begin position="181"/>
        <end position="183"/>
    </location>
</feature>
<feature type="binding site" evidence="1">
    <location>
        <begin position="18"/>
        <end position="23"/>
    </location>
    <ligand>
        <name>GTP</name>
        <dbReference type="ChEBI" id="CHEBI:37565"/>
    </ligand>
</feature>
<feature type="binding site" evidence="1">
    <location>
        <position position="18"/>
    </location>
    <ligand>
        <name>Mg(2+)</name>
        <dbReference type="ChEBI" id="CHEBI:18420"/>
        <label>2</label>
    </ligand>
</feature>
<feature type="binding site" evidence="1">
    <location>
        <position position="22"/>
    </location>
    <ligand>
        <name>Mg(2+)</name>
        <dbReference type="ChEBI" id="CHEBI:18420"/>
        <label>1</label>
    </ligand>
</feature>
<feature type="binding site" evidence="1">
    <location>
        <position position="43"/>
    </location>
    <ligand>
        <name>Mg(2+)</name>
        <dbReference type="ChEBI" id="CHEBI:18420"/>
        <label>2</label>
    </ligand>
</feature>
<feature type="binding site" evidence="1">
    <location>
        <position position="45"/>
    </location>
    <ligand>
        <name>Mg(2+)</name>
        <dbReference type="ChEBI" id="CHEBI:18420"/>
        <label>1</label>
    </ligand>
</feature>
<feature type="binding site" evidence="1">
    <location>
        <position position="58"/>
    </location>
    <ligand>
        <name>Zn(2+)</name>
        <dbReference type="ChEBI" id="CHEBI:29105"/>
    </ligand>
</feature>
<feature type="binding site" evidence="1">
    <location>
        <position position="61"/>
    </location>
    <ligand>
        <name>Zn(2+)</name>
        <dbReference type="ChEBI" id="CHEBI:29105"/>
    </ligand>
</feature>
<feature type="binding site" evidence="1">
    <location>
        <position position="73"/>
    </location>
    <ligand>
        <name>Zn(2+)</name>
        <dbReference type="ChEBI" id="CHEBI:29105"/>
    </ligand>
</feature>
<feature type="binding site" evidence="1">
    <location>
        <position position="76"/>
    </location>
    <ligand>
        <name>Zn(2+)</name>
        <dbReference type="ChEBI" id="CHEBI:29105"/>
    </ligand>
</feature>
<feature type="binding site" evidence="1">
    <location>
        <begin position="146"/>
        <end position="149"/>
    </location>
    <ligand>
        <name>GTP</name>
        <dbReference type="ChEBI" id="CHEBI:37565"/>
    </ligand>
</feature>
<feature type="binding site" evidence="1">
    <location>
        <begin position="181"/>
        <end position="183"/>
    </location>
    <ligand>
        <name>GTP</name>
        <dbReference type="ChEBI" id="CHEBI:37565"/>
    </ligand>
</feature>
<evidence type="ECO:0000255" key="1">
    <source>
        <dbReference type="HAMAP-Rule" id="MF_00119"/>
    </source>
</evidence>
<protein>
    <recommendedName>
        <fullName evidence="1">Translation initiation factor 2 subunit gamma</fullName>
        <ecNumber evidence="1">3.6.5.3</ecNumber>
    </recommendedName>
    <alternativeName>
        <fullName evidence="1">aIF2-gamma</fullName>
    </alternativeName>
    <alternativeName>
        <fullName evidence="1">eIF-2-gamma</fullName>
    </alternativeName>
</protein>
<accession>A6VGE8</accession>
<keyword id="KW-0342">GTP-binding</keyword>
<keyword id="KW-0378">Hydrolase</keyword>
<keyword id="KW-0396">Initiation factor</keyword>
<keyword id="KW-0460">Magnesium</keyword>
<keyword id="KW-0479">Metal-binding</keyword>
<keyword id="KW-0547">Nucleotide-binding</keyword>
<keyword id="KW-0648">Protein biosynthesis</keyword>
<keyword id="KW-0862">Zinc</keyword>